<name>RL2_STRAW</name>
<sequence>MGIRKYKPTTPGRRGSSVADFVEVTRSTPEKSLVRPLHSKGGRNNAGRVTVRHQGGGHKRAYRVIDFRRHDKDGVPAKVAHIEYDPNRTARIALLHYADGEKRYILAPRNLQQGDRVENGPGADIKPGNNLALRNIPVGTTVHAIELRPGGGAKFARSAGASVQLLAREGAMATLRMPSGEIRMVDARCRATVGEVGNAEQSNINWGKAGRKRWLGVRPTVRGVAMNPVDHPHGGGEGKTSGGRHPVSPWGQKEGRTRSPKKASSKYIVRRRKTNKKR</sequence>
<protein>
    <recommendedName>
        <fullName evidence="1">Large ribosomal subunit protein uL2</fullName>
    </recommendedName>
    <alternativeName>
        <fullName evidence="3">50S ribosomal protein L2</fullName>
    </alternativeName>
</protein>
<feature type="chain" id="PRO_0000129629" description="Large ribosomal subunit protein uL2">
    <location>
        <begin position="1"/>
        <end position="278"/>
    </location>
</feature>
<feature type="region of interest" description="Disordered" evidence="2">
    <location>
        <begin position="27"/>
        <end position="57"/>
    </location>
</feature>
<feature type="region of interest" description="Disordered" evidence="2">
    <location>
        <begin position="224"/>
        <end position="278"/>
    </location>
</feature>
<feature type="compositionally biased region" description="Basic residues" evidence="2">
    <location>
        <begin position="258"/>
        <end position="278"/>
    </location>
</feature>
<dbReference type="EMBL" id="BA000030">
    <property type="protein sequence ID" value="BAC72641.1"/>
    <property type="molecule type" value="Genomic_DNA"/>
</dbReference>
<dbReference type="RefSeq" id="WP_010986345.1">
    <property type="nucleotide sequence ID" value="NZ_JZJK01000077.1"/>
</dbReference>
<dbReference type="SMR" id="Q82DP2"/>
<dbReference type="GeneID" id="41542012"/>
<dbReference type="KEGG" id="sma:SAVERM_4929"/>
<dbReference type="eggNOG" id="COG0090">
    <property type="taxonomic scope" value="Bacteria"/>
</dbReference>
<dbReference type="HOGENOM" id="CLU_036235_2_1_11"/>
<dbReference type="OrthoDB" id="9778722at2"/>
<dbReference type="Proteomes" id="UP000000428">
    <property type="component" value="Chromosome"/>
</dbReference>
<dbReference type="GO" id="GO:0015934">
    <property type="term" value="C:large ribosomal subunit"/>
    <property type="evidence" value="ECO:0007669"/>
    <property type="project" value="InterPro"/>
</dbReference>
<dbReference type="GO" id="GO:0019843">
    <property type="term" value="F:rRNA binding"/>
    <property type="evidence" value="ECO:0007669"/>
    <property type="project" value="UniProtKB-UniRule"/>
</dbReference>
<dbReference type="GO" id="GO:0003735">
    <property type="term" value="F:structural constituent of ribosome"/>
    <property type="evidence" value="ECO:0007669"/>
    <property type="project" value="InterPro"/>
</dbReference>
<dbReference type="GO" id="GO:0016740">
    <property type="term" value="F:transferase activity"/>
    <property type="evidence" value="ECO:0007669"/>
    <property type="project" value="InterPro"/>
</dbReference>
<dbReference type="GO" id="GO:0002181">
    <property type="term" value="P:cytoplasmic translation"/>
    <property type="evidence" value="ECO:0007669"/>
    <property type="project" value="TreeGrafter"/>
</dbReference>
<dbReference type="FunFam" id="2.30.30.30:FF:000001">
    <property type="entry name" value="50S ribosomal protein L2"/>
    <property type="match status" value="1"/>
</dbReference>
<dbReference type="FunFam" id="2.40.50.140:FF:000003">
    <property type="entry name" value="50S ribosomal protein L2"/>
    <property type="match status" value="1"/>
</dbReference>
<dbReference type="FunFam" id="4.10.950.10:FF:000001">
    <property type="entry name" value="50S ribosomal protein L2"/>
    <property type="match status" value="1"/>
</dbReference>
<dbReference type="Gene3D" id="2.30.30.30">
    <property type="match status" value="1"/>
</dbReference>
<dbReference type="Gene3D" id="2.40.50.140">
    <property type="entry name" value="Nucleic acid-binding proteins"/>
    <property type="match status" value="1"/>
</dbReference>
<dbReference type="Gene3D" id="4.10.950.10">
    <property type="entry name" value="Ribosomal protein L2, domain 3"/>
    <property type="match status" value="1"/>
</dbReference>
<dbReference type="HAMAP" id="MF_01320_B">
    <property type="entry name" value="Ribosomal_uL2_B"/>
    <property type="match status" value="1"/>
</dbReference>
<dbReference type="InterPro" id="IPR012340">
    <property type="entry name" value="NA-bd_OB-fold"/>
</dbReference>
<dbReference type="InterPro" id="IPR014722">
    <property type="entry name" value="Rib_uL2_dom2"/>
</dbReference>
<dbReference type="InterPro" id="IPR002171">
    <property type="entry name" value="Ribosomal_uL2"/>
</dbReference>
<dbReference type="InterPro" id="IPR005880">
    <property type="entry name" value="Ribosomal_uL2_bac/org-type"/>
</dbReference>
<dbReference type="InterPro" id="IPR022669">
    <property type="entry name" value="Ribosomal_uL2_C"/>
</dbReference>
<dbReference type="InterPro" id="IPR022671">
    <property type="entry name" value="Ribosomal_uL2_CS"/>
</dbReference>
<dbReference type="InterPro" id="IPR014726">
    <property type="entry name" value="Ribosomal_uL2_dom3"/>
</dbReference>
<dbReference type="InterPro" id="IPR022666">
    <property type="entry name" value="Ribosomal_uL2_RNA-bd_dom"/>
</dbReference>
<dbReference type="InterPro" id="IPR008991">
    <property type="entry name" value="Translation_prot_SH3-like_sf"/>
</dbReference>
<dbReference type="NCBIfam" id="TIGR01171">
    <property type="entry name" value="rplB_bact"/>
    <property type="match status" value="1"/>
</dbReference>
<dbReference type="PANTHER" id="PTHR13691:SF5">
    <property type="entry name" value="LARGE RIBOSOMAL SUBUNIT PROTEIN UL2M"/>
    <property type="match status" value="1"/>
</dbReference>
<dbReference type="PANTHER" id="PTHR13691">
    <property type="entry name" value="RIBOSOMAL PROTEIN L2"/>
    <property type="match status" value="1"/>
</dbReference>
<dbReference type="Pfam" id="PF00181">
    <property type="entry name" value="Ribosomal_L2"/>
    <property type="match status" value="1"/>
</dbReference>
<dbReference type="Pfam" id="PF03947">
    <property type="entry name" value="Ribosomal_L2_C"/>
    <property type="match status" value="1"/>
</dbReference>
<dbReference type="PIRSF" id="PIRSF002158">
    <property type="entry name" value="Ribosomal_L2"/>
    <property type="match status" value="1"/>
</dbReference>
<dbReference type="SMART" id="SM01383">
    <property type="entry name" value="Ribosomal_L2"/>
    <property type="match status" value="1"/>
</dbReference>
<dbReference type="SMART" id="SM01382">
    <property type="entry name" value="Ribosomal_L2_C"/>
    <property type="match status" value="1"/>
</dbReference>
<dbReference type="SUPFAM" id="SSF50249">
    <property type="entry name" value="Nucleic acid-binding proteins"/>
    <property type="match status" value="1"/>
</dbReference>
<dbReference type="SUPFAM" id="SSF50104">
    <property type="entry name" value="Translation proteins SH3-like domain"/>
    <property type="match status" value="1"/>
</dbReference>
<dbReference type="PROSITE" id="PS00467">
    <property type="entry name" value="RIBOSOMAL_L2"/>
    <property type="match status" value="1"/>
</dbReference>
<evidence type="ECO:0000255" key="1">
    <source>
        <dbReference type="HAMAP-Rule" id="MF_01320"/>
    </source>
</evidence>
<evidence type="ECO:0000256" key="2">
    <source>
        <dbReference type="SAM" id="MobiDB-lite"/>
    </source>
</evidence>
<evidence type="ECO:0000305" key="3"/>
<gene>
    <name evidence="1" type="primary">rplB</name>
    <name type="ordered locus">SAV_4929</name>
</gene>
<organism>
    <name type="scientific">Streptomyces avermitilis (strain ATCC 31267 / DSM 46492 / JCM 5070 / NBRC 14893 / NCIMB 12804 / NRRL 8165 / MA-4680)</name>
    <dbReference type="NCBI Taxonomy" id="227882"/>
    <lineage>
        <taxon>Bacteria</taxon>
        <taxon>Bacillati</taxon>
        <taxon>Actinomycetota</taxon>
        <taxon>Actinomycetes</taxon>
        <taxon>Kitasatosporales</taxon>
        <taxon>Streptomycetaceae</taxon>
        <taxon>Streptomyces</taxon>
    </lineage>
</organism>
<proteinExistence type="inferred from homology"/>
<keyword id="KW-1185">Reference proteome</keyword>
<keyword id="KW-0687">Ribonucleoprotein</keyword>
<keyword id="KW-0689">Ribosomal protein</keyword>
<keyword id="KW-0694">RNA-binding</keyword>
<keyword id="KW-0699">rRNA-binding</keyword>
<comment type="function">
    <text evidence="1">One of the primary rRNA binding proteins. Required for association of the 30S and 50S subunits to form the 70S ribosome, for tRNA binding and peptide bond formation. It has been suggested to have peptidyltransferase activity; this is somewhat controversial. Makes several contacts with the 16S rRNA in the 70S ribosome.</text>
</comment>
<comment type="subunit">
    <text evidence="1">Part of the 50S ribosomal subunit. Forms a bridge to the 30S subunit in the 70S ribosome.</text>
</comment>
<comment type="similarity">
    <text evidence="1">Belongs to the universal ribosomal protein uL2 family.</text>
</comment>
<reference key="1">
    <citation type="journal article" date="2001" name="Proc. Natl. Acad. Sci. U.S.A.">
        <title>Genome sequence of an industrial microorganism Streptomyces avermitilis: deducing the ability of producing secondary metabolites.</title>
        <authorList>
            <person name="Omura S."/>
            <person name="Ikeda H."/>
            <person name="Ishikawa J."/>
            <person name="Hanamoto A."/>
            <person name="Takahashi C."/>
            <person name="Shinose M."/>
            <person name="Takahashi Y."/>
            <person name="Horikawa H."/>
            <person name="Nakazawa H."/>
            <person name="Osonoe T."/>
            <person name="Kikuchi H."/>
            <person name="Shiba T."/>
            <person name="Sakaki Y."/>
            <person name="Hattori M."/>
        </authorList>
    </citation>
    <scope>NUCLEOTIDE SEQUENCE [LARGE SCALE GENOMIC DNA]</scope>
    <source>
        <strain>ATCC 31267 / DSM 46492 / JCM 5070 / NBRC 14893 / NCIMB 12804 / NRRL 8165 / MA-4680</strain>
    </source>
</reference>
<reference key="2">
    <citation type="journal article" date="2003" name="Nat. Biotechnol.">
        <title>Complete genome sequence and comparative analysis of the industrial microorganism Streptomyces avermitilis.</title>
        <authorList>
            <person name="Ikeda H."/>
            <person name="Ishikawa J."/>
            <person name="Hanamoto A."/>
            <person name="Shinose M."/>
            <person name="Kikuchi H."/>
            <person name="Shiba T."/>
            <person name="Sakaki Y."/>
            <person name="Hattori M."/>
            <person name="Omura S."/>
        </authorList>
    </citation>
    <scope>NUCLEOTIDE SEQUENCE [LARGE SCALE GENOMIC DNA]</scope>
    <source>
        <strain>ATCC 31267 / DSM 46492 / JCM 5070 / NBRC 14893 / NCIMB 12804 / NRRL 8165 / MA-4680</strain>
    </source>
</reference>
<accession>Q82DP2</accession>